<accession>P52749</accession>
<gene>
    <name evidence="6" type="primary">hydPt-2</name>
</gene>
<name>HYP2_PISTI</name>
<proteinExistence type="evidence at transcript level"/>
<dbReference type="EMBL" id="U29606">
    <property type="protein sequence ID" value="AAC49308.1"/>
    <property type="molecule type" value="mRNA"/>
</dbReference>
<dbReference type="PIR" id="JC4608">
    <property type="entry name" value="JC4608"/>
</dbReference>
<dbReference type="SMR" id="P52749"/>
<dbReference type="GO" id="GO:0005576">
    <property type="term" value="C:extracellular region"/>
    <property type="evidence" value="ECO:0007669"/>
    <property type="project" value="UniProtKB-KW"/>
</dbReference>
<dbReference type="GO" id="GO:0009277">
    <property type="term" value="C:fungal-type cell wall"/>
    <property type="evidence" value="ECO:0007669"/>
    <property type="project" value="InterPro"/>
</dbReference>
<dbReference type="GO" id="GO:0005199">
    <property type="term" value="F:structural constituent of cell wall"/>
    <property type="evidence" value="ECO:0007669"/>
    <property type="project" value="InterPro"/>
</dbReference>
<dbReference type="CDD" id="cd23507">
    <property type="entry name" value="hydrophobin_I"/>
    <property type="match status" value="1"/>
</dbReference>
<dbReference type="InterPro" id="IPR001338">
    <property type="entry name" value="Hydrophobin"/>
</dbReference>
<dbReference type="InterPro" id="IPR019778">
    <property type="entry name" value="Hydrophobin_CS"/>
</dbReference>
<dbReference type="Pfam" id="PF01185">
    <property type="entry name" value="Hydrophobin"/>
    <property type="match status" value="1"/>
</dbReference>
<dbReference type="SMART" id="SM00075">
    <property type="entry name" value="HYDRO"/>
    <property type="match status" value="1"/>
</dbReference>
<dbReference type="PROSITE" id="PS00956">
    <property type="entry name" value="HYDROPHOBIN"/>
    <property type="match status" value="1"/>
</dbReference>
<evidence type="ECO:0000250" key="1">
    <source>
        <dbReference type="UniProtKB" id="Q04571"/>
    </source>
</evidence>
<evidence type="ECO:0000255" key="2"/>
<evidence type="ECO:0000269" key="3">
    <source>
    </source>
</evidence>
<evidence type="ECO:0000269" key="4">
    <source>
    </source>
</evidence>
<evidence type="ECO:0000269" key="5">
    <source>
    </source>
</evidence>
<evidence type="ECO:0000303" key="6">
    <source>
    </source>
</evidence>
<evidence type="ECO:0000303" key="7">
    <source>
    </source>
</evidence>
<evidence type="ECO:0000305" key="8"/>
<keyword id="KW-0134">Cell wall</keyword>
<keyword id="KW-1015">Disulfide bond</keyword>
<keyword id="KW-0964">Secreted</keyword>
<keyword id="KW-0732">Signal</keyword>
<feature type="signal peptide" evidence="2">
    <location>
        <begin position="1" status="less than"/>
        <end position="21"/>
    </location>
</feature>
<feature type="chain" id="PRO_0000013505" description="Class I hydrophobin 2">
    <location>
        <begin position="22"/>
        <end position="117"/>
    </location>
</feature>
<feature type="disulfide bond" evidence="1">
    <location>
        <begin position="35"/>
        <end position="96"/>
    </location>
</feature>
<feature type="disulfide bond" evidence="1">
    <location>
        <begin position="42"/>
        <end position="90"/>
    </location>
</feature>
<feature type="disulfide bond" evidence="1">
    <location>
        <begin position="43"/>
        <end position="76"/>
    </location>
</feature>
<feature type="disulfide bond" evidence="1">
    <location>
        <begin position="97"/>
        <end position="110"/>
    </location>
</feature>
<feature type="non-terminal residue">
    <location>
        <position position="1"/>
    </location>
</feature>
<organism>
    <name type="scientific">Pisolithus tinctorius</name>
    <name type="common">Dead man's foot</name>
    <name type="synonym">Scleroderma tinctorium</name>
    <dbReference type="NCBI Taxonomy" id="37468"/>
    <lineage>
        <taxon>Eukaryota</taxon>
        <taxon>Fungi</taxon>
        <taxon>Dikarya</taxon>
        <taxon>Basidiomycota</taxon>
        <taxon>Agaricomycotina</taxon>
        <taxon>Agaricomycetes</taxon>
        <taxon>Agaricomycetidae</taxon>
        <taxon>Boletales</taxon>
        <taxon>Sclerodermatineae</taxon>
        <taxon>Pisolithaceae</taxon>
        <taxon>Pisolithus</taxon>
    </lineage>
</organism>
<reference key="1">
    <citation type="journal article" date="1996" name="Gene">
        <title>Cloning and characterization of hydrophobins-encoding cDNAs from the ectomycorrhizal basdiomycete Pisolithus tinctorius.</title>
        <authorList>
            <person name="Tagu D."/>
            <person name="Nasse B."/>
            <person name="Martin F."/>
        </authorList>
    </citation>
    <scope>NUCLEOTIDE SEQUENCE [MRNA]</scope>
    <scope>DEVELOPMENTAL STAGE</scope>
    <source>
        <strain>441</strain>
    </source>
</reference>
<reference key="2">
    <citation type="journal article" date="2001" name="Curr. Genet.">
        <title>Cloning and expression analysis of a new hydrophobin cDNA from the ectomycorrhizal basidiomycete Pisolithus.</title>
        <authorList>
            <person name="Duplessis S."/>
            <person name="Sorin C."/>
            <person name="Voiblet C."/>
            <person name="Palin B."/>
            <person name="Martin F."/>
            <person name="Tagu D."/>
        </authorList>
    </citation>
    <scope>INDUCTION</scope>
</reference>
<reference key="3">
    <citation type="journal article" date="2008" name="Curr. Microbiol.">
        <title>Fungal transcript pattern during the preinfection stage (12 h) of ectomycorrhiza formed between Pisolithus tinctorius and Castanea sativa roots, identified using cDNA microarrays.</title>
        <authorList>
            <person name="Acioli-Santos B."/>
            <person name="Sebastiana M."/>
            <person name="Pessoa F."/>
            <person name="Sousa L."/>
            <person name="Figueiredo A."/>
            <person name="Fortes A.M."/>
            <person name="Balde A."/>
            <person name="Maia L.C."/>
            <person name="Pais M.S."/>
        </authorList>
    </citation>
    <scope>INDUCTION</scope>
</reference>
<protein>
    <recommendedName>
        <fullName evidence="7">Class I hydrophobin 2</fullName>
    </recommendedName>
</protein>
<sequence>EIVSLSLSLLAVVPLVVLVIAGPLNVRGGTPSQQCNTGTPQCCQQVQQTSDLQQFRSSFGLVDALAGASALVGANCNPVSVLGTGNGAQCNTQPVCCTSNQMLGAVNMGCMPLNVNA</sequence>
<comment type="function">
    <text evidence="8">Aerial growth, conidiation, and dispersal of filamentous fungi in the environment rely upon a capability of their secreting small amphipathic proteins called hydrophobins (HPBs) with low sequence identity. Class I can self-assemble into an outermost layer of rodlet bundles on aerial cell surfaces, conferring cellular hydrophobicity that supports fungal growth, development and dispersal; whereas Class II form highly ordered films at water-air interfaces through intermolecular interactions but contribute nothing to the rodlet structure.</text>
</comment>
<comment type="subunit">
    <text evidence="1">Self-assembles to form functional amyloid fibrils called rodlets. Self-assembly into fibrillar rodlets occurs spontaneously at hydrophobic:hydrophilic interfaces and the rodlets further associate laterally to form amphipathic monolayers.</text>
</comment>
<comment type="subcellular location">
    <subcellularLocation>
        <location evidence="1">Secreted</location>
    </subcellularLocation>
    <subcellularLocation>
        <location evidence="1">Secreted</location>
        <location evidence="1">Cell wall</location>
    </subcellularLocation>
</comment>
<comment type="developmental stage">
    <text evidence="5">Not expressed in mycelia grown in liquid culture but accumulates highly in aerial hyphae (PubMed:8626073). Also highly expressed in abundant in Eucalyptus globulus-Pt ectomycorrhiza in early stages of differentiation, during the colonization of roots (PubMed:8626073).</text>
</comment>
<comment type="induction">
    <text evidence="3 4">Expression is not regulated by ammonium and glucose concentrations (PubMed:11525407). Expression is down-regulated during preinfection stage (12h) of ectomycorrhizal interaction with Castanea sativa roots (PubMed:18836771).</text>
</comment>
<comment type="similarity">
    <text evidence="8">Belongs to the fungal hydrophobin family.</text>
</comment>